<reference key="1">
    <citation type="submission" date="1998-11" db="EMBL/GenBank/DDBJ databases">
        <title>Protein kinase inhibitor gamma mRNA, complete cds.</title>
        <authorList>
            <person name="Saito T."/>
            <person name="Miyajima N."/>
        </authorList>
    </citation>
    <scope>NUCLEOTIDE SEQUENCE [MRNA]</scope>
</reference>
<reference key="2">
    <citation type="journal article" date="1997" name="J. Biol. Chem.">
        <title>Characterization of PKI-gamma, a novel isoform of the protein kinase inhibitor of cAMP-dependent protein kinase.</title>
        <authorList>
            <person name="Collins S.P."/>
            <person name="Uhler M.D."/>
        </authorList>
    </citation>
    <scope>NUCLEOTIDE SEQUENCE [MRNA]</scope>
    <source>
        <tissue>Parathyroid</tissue>
    </source>
</reference>
<reference key="3">
    <citation type="journal article" date="2000" name="Biochem. J.">
        <title>Cloning and mapping of human PKIB and PKIG, and comparison of tissue expression patterns of three members of the protein kinase inhibitor family, including PKIA.</title>
        <authorList>
            <person name="Zheng L."/>
            <person name="Yu L."/>
            <person name="Tu Q."/>
            <person name="Zhang M."/>
            <person name="He H."/>
            <person name="Chen W."/>
            <person name="Gao J."/>
            <person name="Yu J."/>
            <person name="Wu Q."/>
            <person name="Zhao S."/>
        </authorList>
    </citation>
    <scope>NUCLEOTIDE SEQUENCE [MRNA]</scope>
</reference>
<reference key="4">
    <citation type="journal article" date="2001" name="Nature">
        <title>The DNA sequence and comparative analysis of human chromosome 20.</title>
        <authorList>
            <person name="Deloukas P."/>
            <person name="Matthews L.H."/>
            <person name="Ashurst J.L."/>
            <person name="Burton J."/>
            <person name="Gilbert J.G.R."/>
            <person name="Jones M."/>
            <person name="Stavrides G."/>
            <person name="Almeida J.P."/>
            <person name="Babbage A.K."/>
            <person name="Bagguley C.L."/>
            <person name="Bailey J."/>
            <person name="Barlow K.F."/>
            <person name="Bates K.N."/>
            <person name="Beard L.M."/>
            <person name="Beare D.M."/>
            <person name="Beasley O.P."/>
            <person name="Bird C.P."/>
            <person name="Blakey S.E."/>
            <person name="Bridgeman A.M."/>
            <person name="Brown A.J."/>
            <person name="Buck D."/>
            <person name="Burrill W.D."/>
            <person name="Butler A.P."/>
            <person name="Carder C."/>
            <person name="Carter N.P."/>
            <person name="Chapman J.C."/>
            <person name="Clamp M."/>
            <person name="Clark G."/>
            <person name="Clark L.N."/>
            <person name="Clark S.Y."/>
            <person name="Clee C.M."/>
            <person name="Clegg S."/>
            <person name="Cobley V.E."/>
            <person name="Collier R.E."/>
            <person name="Connor R.E."/>
            <person name="Corby N.R."/>
            <person name="Coulson A."/>
            <person name="Coville G.J."/>
            <person name="Deadman R."/>
            <person name="Dhami P.D."/>
            <person name="Dunn M."/>
            <person name="Ellington A.G."/>
            <person name="Frankland J.A."/>
            <person name="Fraser A."/>
            <person name="French L."/>
            <person name="Garner P."/>
            <person name="Grafham D.V."/>
            <person name="Griffiths C."/>
            <person name="Griffiths M.N.D."/>
            <person name="Gwilliam R."/>
            <person name="Hall R.E."/>
            <person name="Hammond S."/>
            <person name="Harley J.L."/>
            <person name="Heath P.D."/>
            <person name="Ho S."/>
            <person name="Holden J.L."/>
            <person name="Howden P.J."/>
            <person name="Huckle E."/>
            <person name="Hunt A.R."/>
            <person name="Hunt S.E."/>
            <person name="Jekosch K."/>
            <person name="Johnson C.M."/>
            <person name="Johnson D."/>
            <person name="Kay M.P."/>
            <person name="Kimberley A.M."/>
            <person name="King A."/>
            <person name="Knights A."/>
            <person name="Laird G.K."/>
            <person name="Lawlor S."/>
            <person name="Lehvaeslaiho M.H."/>
            <person name="Leversha M.A."/>
            <person name="Lloyd C."/>
            <person name="Lloyd D.M."/>
            <person name="Lovell J.D."/>
            <person name="Marsh V.L."/>
            <person name="Martin S.L."/>
            <person name="McConnachie L.J."/>
            <person name="McLay K."/>
            <person name="McMurray A.A."/>
            <person name="Milne S.A."/>
            <person name="Mistry D."/>
            <person name="Moore M.J.F."/>
            <person name="Mullikin J.C."/>
            <person name="Nickerson T."/>
            <person name="Oliver K."/>
            <person name="Parker A."/>
            <person name="Patel R."/>
            <person name="Pearce T.A.V."/>
            <person name="Peck A.I."/>
            <person name="Phillimore B.J.C.T."/>
            <person name="Prathalingam S.R."/>
            <person name="Plumb R.W."/>
            <person name="Ramsay H."/>
            <person name="Rice C.M."/>
            <person name="Ross M.T."/>
            <person name="Scott C.E."/>
            <person name="Sehra H.K."/>
            <person name="Shownkeen R."/>
            <person name="Sims S."/>
            <person name="Skuce C.D."/>
            <person name="Smith M.L."/>
            <person name="Soderlund C."/>
            <person name="Steward C.A."/>
            <person name="Sulston J.E."/>
            <person name="Swann R.M."/>
            <person name="Sycamore N."/>
            <person name="Taylor R."/>
            <person name="Tee L."/>
            <person name="Thomas D.W."/>
            <person name="Thorpe A."/>
            <person name="Tracey A."/>
            <person name="Tromans A.C."/>
            <person name="Vaudin M."/>
            <person name="Wall M."/>
            <person name="Wallis J.M."/>
            <person name="Whitehead S.L."/>
            <person name="Whittaker P."/>
            <person name="Willey D.L."/>
            <person name="Williams L."/>
            <person name="Williams S.A."/>
            <person name="Wilming L."/>
            <person name="Wray P.W."/>
            <person name="Hubbard T."/>
            <person name="Durbin R.M."/>
            <person name="Bentley D.R."/>
            <person name="Beck S."/>
            <person name="Rogers J."/>
        </authorList>
    </citation>
    <scope>NUCLEOTIDE SEQUENCE [LARGE SCALE GENOMIC DNA]</scope>
</reference>
<sequence length="76" mass="7910">MMEVESSYSDFISCDRTGRRNAVPDIQGDSEAVSVRKLAGDMGELALEGAEGQVEGSAPDKEAGNQPQSSDGTTSS</sequence>
<dbReference type="EMBL" id="AB019517">
    <property type="protein sequence ID" value="BAA77336.1"/>
    <property type="molecule type" value="mRNA"/>
</dbReference>
<dbReference type="EMBL" id="AF182032">
    <property type="protein sequence ID" value="AAD55445.1"/>
    <property type="molecule type" value="mRNA"/>
</dbReference>
<dbReference type="EMBL" id="Z97053">
    <property type="status" value="NOT_ANNOTATED_CDS"/>
    <property type="molecule type" value="Genomic_DNA"/>
</dbReference>
<dbReference type="CCDS" id="CCDS13334.1"/>
<dbReference type="RefSeq" id="NP_001268373.1">
    <property type="nucleotide sequence ID" value="NM_001281444.2"/>
</dbReference>
<dbReference type="RefSeq" id="NP_001268374.1">
    <property type="nucleotide sequence ID" value="NM_001281445.2"/>
</dbReference>
<dbReference type="RefSeq" id="NP_008997.1">
    <property type="nucleotide sequence ID" value="NM_007066.5"/>
</dbReference>
<dbReference type="RefSeq" id="NP_861520.1">
    <property type="nucleotide sequence ID" value="NM_181804.3"/>
</dbReference>
<dbReference type="RefSeq" id="NP_861521.1">
    <property type="nucleotide sequence ID" value="NM_181805.3"/>
</dbReference>
<dbReference type="RefSeq" id="XP_016883103.1">
    <property type="nucleotide sequence ID" value="XM_017027614.1"/>
</dbReference>
<dbReference type="RefSeq" id="XP_016883104.1">
    <property type="nucleotide sequence ID" value="XM_017027615.2"/>
</dbReference>
<dbReference type="RefSeq" id="XP_016883105.1">
    <property type="nucleotide sequence ID" value="XM_017027616.2"/>
</dbReference>
<dbReference type="RefSeq" id="XP_047295805.1">
    <property type="nucleotide sequence ID" value="XM_047439849.1"/>
</dbReference>
<dbReference type="RefSeq" id="XP_047295806.1">
    <property type="nucleotide sequence ID" value="XM_047439850.1"/>
</dbReference>
<dbReference type="RefSeq" id="XP_047295807.1">
    <property type="nucleotide sequence ID" value="XM_047439851.1"/>
</dbReference>
<dbReference type="RefSeq" id="XP_047295808.1">
    <property type="nucleotide sequence ID" value="XM_047439852.1"/>
</dbReference>
<dbReference type="RefSeq" id="XP_054178856.1">
    <property type="nucleotide sequence ID" value="XM_054322881.1"/>
</dbReference>
<dbReference type="RefSeq" id="XP_054178857.1">
    <property type="nucleotide sequence ID" value="XM_054322882.1"/>
</dbReference>
<dbReference type="RefSeq" id="XP_054178858.1">
    <property type="nucleotide sequence ID" value="XM_054322883.1"/>
</dbReference>
<dbReference type="RefSeq" id="XP_054178859.1">
    <property type="nucleotide sequence ID" value="XM_054322884.1"/>
</dbReference>
<dbReference type="RefSeq" id="XP_054178860.1">
    <property type="nucleotide sequence ID" value="XM_054322885.1"/>
</dbReference>
<dbReference type="RefSeq" id="XP_054178861.1">
    <property type="nucleotide sequence ID" value="XM_054322886.1"/>
</dbReference>
<dbReference type="BioGRID" id="116314">
    <property type="interactions" value="12"/>
</dbReference>
<dbReference type="FunCoup" id="Q9Y2B9">
    <property type="interactions" value="1109"/>
</dbReference>
<dbReference type="IntAct" id="Q9Y2B9">
    <property type="interactions" value="7"/>
</dbReference>
<dbReference type="STRING" id="9606.ENSP00000361980"/>
<dbReference type="iPTMnet" id="Q9Y2B9"/>
<dbReference type="PhosphoSitePlus" id="Q9Y2B9"/>
<dbReference type="BioMuta" id="PKIG"/>
<dbReference type="jPOST" id="Q9Y2B9"/>
<dbReference type="MassIVE" id="Q9Y2B9"/>
<dbReference type="PaxDb" id="9606-ENSP00000361980"/>
<dbReference type="PeptideAtlas" id="Q9Y2B9"/>
<dbReference type="ProteomicsDB" id="85722"/>
<dbReference type="Pumba" id="Q9Y2B9"/>
<dbReference type="Antibodypedia" id="27423">
    <property type="antibodies" value="70 antibodies from 17 providers"/>
</dbReference>
<dbReference type="DNASU" id="11142"/>
<dbReference type="Ensembl" id="ENST00000349959.3">
    <property type="protein sequence ID" value="ENSP00000338067.3"/>
    <property type="gene ID" value="ENSG00000168734.14"/>
</dbReference>
<dbReference type="Ensembl" id="ENST00000372886.6">
    <property type="protein sequence ID" value="ENSP00000361977.1"/>
    <property type="gene ID" value="ENSG00000168734.14"/>
</dbReference>
<dbReference type="Ensembl" id="ENST00000372889.5">
    <property type="protein sequence ID" value="ENSP00000361980.1"/>
    <property type="gene ID" value="ENSG00000168734.14"/>
</dbReference>
<dbReference type="Ensembl" id="ENST00000372891.7">
    <property type="protein sequence ID" value="ENSP00000361981.3"/>
    <property type="gene ID" value="ENSG00000168734.14"/>
</dbReference>
<dbReference type="Ensembl" id="ENST00000372892.7">
    <property type="protein sequence ID" value="ENSP00000361983.3"/>
    <property type="gene ID" value="ENSG00000168734.14"/>
</dbReference>
<dbReference type="Ensembl" id="ENST00000372894.7">
    <property type="protein sequence ID" value="ENSP00000361985.3"/>
    <property type="gene ID" value="ENSG00000168734.14"/>
</dbReference>
<dbReference type="GeneID" id="11142"/>
<dbReference type="KEGG" id="hsa:11142"/>
<dbReference type="MANE-Select" id="ENST00000372886.6">
    <property type="protein sequence ID" value="ENSP00000361977.1"/>
    <property type="RefSeq nucleotide sequence ID" value="NM_001281445.2"/>
    <property type="RefSeq protein sequence ID" value="NP_001268374.1"/>
</dbReference>
<dbReference type="UCSC" id="uc002xmg.5">
    <property type="organism name" value="human"/>
</dbReference>
<dbReference type="AGR" id="HGNC:9019"/>
<dbReference type="CTD" id="11142"/>
<dbReference type="DisGeNET" id="11142"/>
<dbReference type="GeneCards" id="PKIG"/>
<dbReference type="HGNC" id="HGNC:9019">
    <property type="gene designation" value="PKIG"/>
</dbReference>
<dbReference type="HPA" id="ENSG00000168734">
    <property type="expression patterns" value="Low tissue specificity"/>
</dbReference>
<dbReference type="MIM" id="604932">
    <property type="type" value="gene"/>
</dbReference>
<dbReference type="neXtProt" id="NX_Q9Y2B9"/>
<dbReference type="OpenTargets" id="ENSG00000168734"/>
<dbReference type="PharmGKB" id="PA33351"/>
<dbReference type="VEuPathDB" id="HostDB:ENSG00000168734"/>
<dbReference type="eggNOG" id="ENOG502SBS3">
    <property type="taxonomic scope" value="Eukaryota"/>
</dbReference>
<dbReference type="GeneTree" id="ENSGT00390000002707"/>
<dbReference type="HOGENOM" id="CLU_163471_2_0_1"/>
<dbReference type="InParanoid" id="Q9Y2B9"/>
<dbReference type="OMA" id="TRDSHIF"/>
<dbReference type="OrthoDB" id="8556393at2759"/>
<dbReference type="PAN-GO" id="Q9Y2B9">
    <property type="GO annotations" value="4 GO annotations based on evolutionary models"/>
</dbReference>
<dbReference type="PhylomeDB" id="Q9Y2B9"/>
<dbReference type="TreeFam" id="TF330809"/>
<dbReference type="PathwayCommons" id="Q9Y2B9"/>
<dbReference type="SignaLink" id="Q9Y2B9"/>
<dbReference type="BioGRID-ORCS" id="11142">
    <property type="hits" value="17 hits in 1154 CRISPR screens"/>
</dbReference>
<dbReference type="ChiTaRS" id="PKIG">
    <property type="organism name" value="human"/>
</dbReference>
<dbReference type="GeneWiki" id="PKIG"/>
<dbReference type="GenomeRNAi" id="11142"/>
<dbReference type="Pharos" id="Q9Y2B9">
    <property type="development level" value="Tbio"/>
</dbReference>
<dbReference type="PRO" id="PR:Q9Y2B9"/>
<dbReference type="Proteomes" id="UP000005640">
    <property type="component" value="Chromosome 20"/>
</dbReference>
<dbReference type="RNAct" id="Q9Y2B9">
    <property type="molecule type" value="protein"/>
</dbReference>
<dbReference type="Bgee" id="ENSG00000168734">
    <property type="expression patterns" value="Expressed in right coronary artery and 203 other cell types or tissues"/>
</dbReference>
<dbReference type="ExpressionAtlas" id="Q9Y2B9">
    <property type="expression patterns" value="baseline and differential"/>
</dbReference>
<dbReference type="GO" id="GO:0005737">
    <property type="term" value="C:cytoplasm"/>
    <property type="evidence" value="ECO:0000318"/>
    <property type="project" value="GO_Central"/>
</dbReference>
<dbReference type="GO" id="GO:0005634">
    <property type="term" value="C:nucleus"/>
    <property type="evidence" value="ECO:0000318"/>
    <property type="project" value="GO_Central"/>
</dbReference>
<dbReference type="GO" id="GO:0004862">
    <property type="term" value="F:cAMP-dependent protein kinase inhibitor activity"/>
    <property type="evidence" value="ECO:0000318"/>
    <property type="project" value="GO_Central"/>
</dbReference>
<dbReference type="GO" id="GO:0042308">
    <property type="term" value="P:negative regulation of protein import into nucleus"/>
    <property type="evidence" value="ECO:0007669"/>
    <property type="project" value="Ensembl"/>
</dbReference>
<dbReference type="GO" id="GO:0000122">
    <property type="term" value="P:negative regulation of transcription by RNA polymerase II"/>
    <property type="evidence" value="ECO:0007669"/>
    <property type="project" value="Ensembl"/>
</dbReference>
<dbReference type="InterPro" id="IPR004171">
    <property type="entry name" value="cAMP_dep_PKI"/>
</dbReference>
<dbReference type="PANTHER" id="PTHR15416">
    <property type="entry name" value="CAMP-DEPENDENT PROTEIN KINASE INHIBITOR/PKI"/>
    <property type="match status" value="1"/>
</dbReference>
<dbReference type="Pfam" id="PF02827">
    <property type="entry name" value="PKI"/>
    <property type="match status" value="1"/>
</dbReference>
<dbReference type="PIRSF" id="PIRSF001667">
    <property type="entry name" value="PKI"/>
    <property type="match status" value="1"/>
</dbReference>
<name>IPKG_HUMAN</name>
<protein>
    <recommendedName>
        <fullName>cAMP-dependent protein kinase inhibitor gamma</fullName>
        <shortName>PKI-gamma</shortName>
    </recommendedName>
</protein>
<organism>
    <name type="scientific">Homo sapiens</name>
    <name type="common">Human</name>
    <dbReference type="NCBI Taxonomy" id="9606"/>
    <lineage>
        <taxon>Eukaryota</taxon>
        <taxon>Metazoa</taxon>
        <taxon>Chordata</taxon>
        <taxon>Craniata</taxon>
        <taxon>Vertebrata</taxon>
        <taxon>Euteleostomi</taxon>
        <taxon>Mammalia</taxon>
        <taxon>Eutheria</taxon>
        <taxon>Euarchontoglires</taxon>
        <taxon>Primates</taxon>
        <taxon>Haplorrhini</taxon>
        <taxon>Catarrhini</taxon>
        <taxon>Hominidae</taxon>
        <taxon>Homo</taxon>
    </lineage>
</organism>
<comment type="function">
    <text evidence="1">Extremely potent competitive inhibitor of cAMP-dependent protein kinase activity, this protein interacts with the catalytic subunit of the enzyme after the cAMP-induced dissociation of its regulatory chains.</text>
</comment>
<comment type="interaction">
    <interactant intactId="EBI-1052231">
        <id>Q9Y2B9</id>
    </interactant>
    <interactant intactId="EBI-349105">
        <id>P63167</id>
        <label>DYNLL1</label>
    </interactant>
    <organismsDiffer>false</organismsDiffer>
    <experiments>5</experiments>
</comment>
<comment type="interaction">
    <interactant intactId="EBI-1052231">
        <id>Q9Y2B9</id>
    </interactant>
    <interactant intactId="EBI-742371">
        <id>Q96FJ2</id>
        <label>DYNLL2</label>
    </interactant>
    <organismsDiffer>false</organismsDiffer>
    <experiments>3</experiments>
</comment>
<comment type="tissue specificity">
    <text>Ubiquitous.</text>
</comment>
<comment type="similarity">
    <text evidence="3">Belongs to the PKI family.</text>
</comment>
<feature type="chain" id="PRO_0000154542" description="cAMP-dependent protein kinase inhibitor gamma">
    <location>
        <begin position="1"/>
        <end position="76"/>
    </location>
</feature>
<feature type="region of interest" description="Disordered" evidence="2">
    <location>
        <begin position="1"/>
        <end position="25"/>
    </location>
</feature>
<feature type="region of interest" description="Disordered" evidence="2">
    <location>
        <begin position="44"/>
        <end position="76"/>
    </location>
</feature>
<feature type="compositionally biased region" description="Polar residues" evidence="2">
    <location>
        <begin position="1"/>
        <end position="10"/>
    </location>
</feature>
<feature type="compositionally biased region" description="Polar residues" evidence="2">
    <location>
        <begin position="65"/>
        <end position="76"/>
    </location>
</feature>
<proteinExistence type="evidence at protein level"/>
<accession>Q9Y2B9</accession>
<gene>
    <name type="primary">PKIG</name>
</gene>
<keyword id="KW-0649">Protein kinase inhibitor</keyword>
<keyword id="KW-1267">Proteomics identification</keyword>
<keyword id="KW-1185">Reference proteome</keyword>
<evidence type="ECO:0000250" key="1"/>
<evidence type="ECO:0000256" key="2">
    <source>
        <dbReference type="SAM" id="MobiDB-lite"/>
    </source>
</evidence>
<evidence type="ECO:0000305" key="3"/>